<sequence length="85" mass="9534">MNLSRQEQRTLHVLAKGGRITHIRDASGRVTAVECYSREGLLLADCTLAVFKKLKTKKLIKSVNGQPYRINTTGLNNVRAQPDNR</sequence>
<proteinExistence type="inferred from homology"/>
<feature type="chain" id="PRO_1000083944" description="UPF0386 protein YjhX">
    <location>
        <begin position="1"/>
        <end position="85"/>
    </location>
</feature>
<evidence type="ECO:0000255" key="1">
    <source>
        <dbReference type="HAMAP-Rule" id="MF_00827"/>
    </source>
</evidence>
<reference key="1">
    <citation type="submission" date="2007-11" db="EMBL/GenBank/DDBJ databases">
        <authorList>
            <consortium name="The Salmonella enterica serovar Paratyphi B Genome Sequencing Project"/>
            <person name="McClelland M."/>
            <person name="Sanderson E.K."/>
            <person name="Porwollik S."/>
            <person name="Spieth J."/>
            <person name="Clifton W.S."/>
            <person name="Fulton R."/>
            <person name="Cordes M."/>
            <person name="Wollam A."/>
            <person name="Shah N."/>
            <person name="Pepin K."/>
            <person name="Bhonagiri V."/>
            <person name="Nash W."/>
            <person name="Johnson M."/>
            <person name="Thiruvilangam P."/>
            <person name="Wilson R."/>
        </authorList>
    </citation>
    <scope>NUCLEOTIDE SEQUENCE [LARGE SCALE GENOMIC DNA]</scope>
    <source>
        <strain>ATCC BAA-1250 / SPB7</strain>
    </source>
</reference>
<comment type="similarity">
    <text evidence="1">Belongs to the UPF0386 family.</text>
</comment>
<accession>A9N6A3</accession>
<name>YJHX_SALPB</name>
<organism>
    <name type="scientific">Salmonella paratyphi B (strain ATCC BAA-1250 / SPB7)</name>
    <dbReference type="NCBI Taxonomy" id="1016998"/>
    <lineage>
        <taxon>Bacteria</taxon>
        <taxon>Pseudomonadati</taxon>
        <taxon>Pseudomonadota</taxon>
        <taxon>Gammaproteobacteria</taxon>
        <taxon>Enterobacterales</taxon>
        <taxon>Enterobacteriaceae</taxon>
        <taxon>Salmonella</taxon>
    </lineage>
</organism>
<dbReference type="EMBL" id="CP000886">
    <property type="protein sequence ID" value="ABX70927.1"/>
    <property type="molecule type" value="Genomic_DNA"/>
</dbReference>
<dbReference type="RefSeq" id="WP_001054380.1">
    <property type="nucleotide sequence ID" value="NC_010102.1"/>
</dbReference>
<dbReference type="KEGG" id="spq:SPAB_05659"/>
<dbReference type="PATRIC" id="fig|1016998.12.peg.5304"/>
<dbReference type="HOGENOM" id="CLU_164736_0_0_6"/>
<dbReference type="BioCyc" id="SENT1016998:SPAB_RS23105-MONOMER"/>
<dbReference type="Proteomes" id="UP000008556">
    <property type="component" value="Chromosome"/>
</dbReference>
<dbReference type="HAMAP" id="MF_00827">
    <property type="entry name" value="UPF0386"/>
    <property type="match status" value="1"/>
</dbReference>
<dbReference type="InterPro" id="IPR018654">
    <property type="entry name" value="YjhX_toxin"/>
</dbReference>
<dbReference type="NCBIfam" id="NF010240">
    <property type="entry name" value="PRK13687.1"/>
    <property type="match status" value="1"/>
</dbReference>
<dbReference type="Pfam" id="PF09857">
    <property type="entry name" value="YjhX_toxin"/>
    <property type="match status" value="1"/>
</dbReference>
<protein>
    <recommendedName>
        <fullName evidence="1">UPF0386 protein YjhX</fullName>
    </recommendedName>
</protein>
<gene>
    <name evidence="1" type="primary">yjhX</name>
    <name type="ordered locus">SPAB_05659</name>
</gene>